<keyword id="KW-0002">3D-structure</keyword>
<keyword id="KW-0007">Acetylation</keyword>
<keyword id="KW-0963">Cytoplasm</keyword>
<keyword id="KW-1017">Isopeptide bond</keyword>
<keyword id="KW-0597">Phosphoprotein</keyword>
<keyword id="KW-1185">Reference proteome</keyword>
<keyword id="KW-0687">Ribonucleoprotein</keyword>
<keyword id="KW-0689">Ribosomal protein</keyword>
<keyword id="KW-0694">RNA-binding</keyword>
<keyword id="KW-0832">Ubl conjugation</keyword>
<name>RL12_RABIT</name>
<accession>G1SMR7</accession>
<protein>
    <recommendedName>
        <fullName>Large ribosomal subunit protein uL11</fullName>
    </recommendedName>
    <alternativeName>
        <fullName>60S ribosomal protein L12</fullName>
    </alternativeName>
</protein>
<evidence type="ECO:0000250" key="1">
    <source>
        <dbReference type="UniProtKB" id="P30050"/>
    </source>
</evidence>
<evidence type="ECO:0000269" key="2">
    <source>
    </source>
</evidence>
<evidence type="ECO:0000269" key="3">
    <source>
    </source>
</evidence>
<evidence type="ECO:0000269" key="4">
    <source>
    </source>
</evidence>
<evidence type="ECO:0000269" key="5">
    <source>
    </source>
</evidence>
<evidence type="ECO:0000269" key="6">
    <source>
    </source>
</evidence>
<evidence type="ECO:0000269" key="7">
    <source>
    </source>
</evidence>
<evidence type="ECO:0000269" key="8">
    <source>
    </source>
</evidence>
<evidence type="ECO:0000269" key="9">
    <source>
    </source>
</evidence>
<evidence type="ECO:0000269" key="10">
    <source>
    </source>
</evidence>
<evidence type="ECO:0000305" key="11"/>
<evidence type="ECO:0007744" key="12">
    <source>
        <dbReference type="PDB" id="3JAG"/>
    </source>
</evidence>
<evidence type="ECO:0007744" key="13">
    <source>
        <dbReference type="PDB" id="3JAH"/>
    </source>
</evidence>
<evidence type="ECO:0007744" key="14">
    <source>
        <dbReference type="PDB" id="5LZS"/>
    </source>
</evidence>
<evidence type="ECO:0007744" key="15">
    <source>
        <dbReference type="PDB" id="5LZT"/>
    </source>
</evidence>
<evidence type="ECO:0007744" key="16">
    <source>
        <dbReference type="PDB" id="6D90"/>
    </source>
</evidence>
<evidence type="ECO:0007744" key="17">
    <source>
        <dbReference type="PDB" id="6D9J"/>
    </source>
</evidence>
<evidence type="ECO:0007744" key="18">
    <source>
        <dbReference type="PDB" id="6GZ3"/>
    </source>
</evidence>
<evidence type="ECO:0007744" key="19">
    <source>
        <dbReference type="PDB" id="6HCF"/>
    </source>
</evidence>
<evidence type="ECO:0007744" key="20">
    <source>
        <dbReference type="PDB" id="6HCJ"/>
    </source>
</evidence>
<evidence type="ECO:0007744" key="21">
    <source>
        <dbReference type="PDB" id="6MTD"/>
    </source>
</evidence>
<evidence type="ECO:0007744" key="22">
    <source>
        <dbReference type="PDB" id="6MTE"/>
    </source>
</evidence>
<evidence type="ECO:0007744" key="23">
    <source>
        <dbReference type="PDB" id="6R5Q"/>
    </source>
</evidence>
<evidence type="ECO:0007744" key="24">
    <source>
        <dbReference type="PDB" id="6R6G"/>
    </source>
</evidence>
<evidence type="ECO:0007744" key="25">
    <source>
        <dbReference type="PDB" id="6SGC"/>
    </source>
</evidence>
<evidence type="ECO:0007744" key="26">
    <source>
        <dbReference type="PDB" id="6ZVK"/>
    </source>
</evidence>
<evidence type="ECO:0007744" key="27">
    <source>
        <dbReference type="PDB" id="7A01"/>
    </source>
</evidence>
<sequence>MPPKFDPNEIKVVYLRCTGGEVGATSALAPKIGPLGLSPKKVGDDIAKATGDWKGLRITVKLTIQNRQAQIEVVPSASALIIKALKEPPRDRKKQKNIKHSGNITFDEIVNIARQMRHRSLARELSGTIKEILGTAQSVGCNVDGRHPHDIIDDINSGAVECPAS</sequence>
<gene>
    <name type="primary">RPL12</name>
</gene>
<dbReference type="RefSeq" id="XP_002720524.1">
    <property type="nucleotide sequence ID" value="XM_002720478.5"/>
</dbReference>
<dbReference type="PDB" id="3JAG">
    <property type="method" value="EM"/>
    <property type="resolution" value="3.65 A"/>
    <property type="chains" value="t=1-163"/>
</dbReference>
<dbReference type="PDB" id="3JAH">
    <property type="method" value="EM"/>
    <property type="resolution" value="3.45 A"/>
    <property type="chains" value="t=1-163"/>
</dbReference>
<dbReference type="PDB" id="3JAI">
    <property type="method" value="EM"/>
    <property type="resolution" value="3.65 A"/>
    <property type="chains" value="t=1-163"/>
</dbReference>
<dbReference type="PDB" id="5LZS">
    <property type="method" value="EM"/>
    <property type="resolution" value="3.31 A"/>
    <property type="chains" value="t=1-165"/>
</dbReference>
<dbReference type="PDB" id="5LZT">
    <property type="method" value="EM"/>
    <property type="resolution" value="3.65 A"/>
    <property type="chains" value="t=1-165"/>
</dbReference>
<dbReference type="PDB" id="5LZU">
    <property type="method" value="EM"/>
    <property type="resolution" value="3.75 A"/>
    <property type="chains" value="t=1-165"/>
</dbReference>
<dbReference type="PDB" id="5LZV">
    <property type="method" value="EM"/>
    <property type="resolution" value="3.35 A"/>
    <property type="chains" value="t=1-165"/>
</dbReference>
<dbReference type="PDB" id="5LZW">
    <property type="method" value="EM"/>
    <property type="resolution" value="3.53 A"/>
    <property type="chains" value="t=1-165"/>
</dbReference>
<dbReference type="PDB" id="5LZX">
    <property type="method" value="EM"/>
    <property type="resolution" value="3.67 A"/>
    <property type="chains" value="t=1-165"/>
</dbReference>
<dbReference type="PDB" id="5LZY">
    <property type="method" value="EM"/>
    <property type="resolution" value="3.99 A"/>
    <property type="chains" value="t=1-165"/>
</dbReference>
<dbReference type="PDB" id="5LZZ">
    <property type="method" value="EM"/>
    <property type="resolution" value="3.47 A"/>
    <property type="chains" value="t=1-165"/>
</dbReference>
<dbReference type="PDB" id="6D90">
    <property type="method" value="EM"/>
    <property type="resolution" value="3.20 A"/>
    <property type="chains" value="t=1-165"/>
</dbReference>
<dbReference type="PDB" id="6D9J">
    <property type="method" value="EM"/>
    <property type="resolution" value="3.20 A"/>
    <property type="chains" value="t=1-165"/>
</dbReference>
<dbReference type="PDB" id="6FTG">
    <property type="method" value="EM"/>
    <property type="resolution" value="9.10 A"/>
    <property type="chains" value="t=1-163"/>
</dbReference>
<dbReference type="PDB" id="6FTI">
    <property type="method" value="EM"/>
    <property type="resolution" value="4.20 A"/>
    <property type="chains" value="t=1-163"/>
</dbReference>
<dbReference type="PDB" id="6FTJ">
    <property type="method" value="EM"/>
    <property type="resolution" value="4.70 A"/>
    <property type="chains" value="t=1-163"/>
</dbReference>
<dbReference type="PDB" id="6GZ3">
    <property type="method" value="EM"/>
    <property type="resolution" value="3.60 A"/>
    <property type="chains" value="Aq=13-163"/>
</dbReference>
<dbReference type="PDB" id="6HCF">
    <property type="method" value="EM"/>
    <property type="resolution" value="3.90 A"/>
    <property type="chains" value="t3=1-165"/>
</dbReference>
<dbReference type="PDB" id="6HCJ">
    <property type="method" value="EM"/>
    <property type="resolution" value="3.80 A"/>
    <property type="chains" value="u3=1-165"/>
</dbReference>
<dbReference type="PDB" id="6HCM">
    <property type="method" value="EM"/>
    <property type="resolution" value="6.80 A"/>
    <property type="chains" value="t3=1-165"/>
</dbReference>
<dbReference type="PDB" id="6HCQ">
    <property type="method" value="EM"/>
    <property type="resolution" value="6.50 A"/>
    <property type="chains" value="u3=1-165"/>
</dbReference>
<dbReference type="PDB" id="6MTD">
    <property type="method" value="EM"/>
    <property type="resolution" value="3.30 A"/>
    <property type="chains" value="t=9-161"/>
</dbReference>
<dbReference type="PDB" id="6MTE">
    <property type="method" value="EM"/>
    <property type="resolution" value="3.40 A"/>
    <property type="chains" value="t=9-161"/>
</dbReference>
<dbReference type="PDB" id="6R5Q">
    <property type="method" value="EM"/>
    <property type="resolution" value="3.00 A"/>
    <property type="chains" value="t=9-161"/>
</dbReference>
<dbReference type="PDB" id="6R6G">
    <property type="method" value="EM"/>
    <property type="resolution" value="3.70 A"/>
    <property type="chains" value="t=9-161"/>
</dbReference>
<dbReference type="PDB" id="6R6P">
    <property type="method" value="EM"/>
    <property type="resolution" value="3.10 A"/>
    <property type="chains" value="t=1-163"/>
</dbReference>
<dbReference type="PDB" id="6R7Q">
    <property type="method" value="EM"/>
    <property type="resolution" value="3.90 A"/>
    <property type="chains" value="t=9-161"/>
</dbReference>
<dbReference type="PDB" id="6SGC">
    <property type="method" value="EM"/>
    <property type="resolution" value="2.80 A"/>
    <property type="chains" value="t2=1-165"/>
</dbReference>
<dbReference type="PDB" id="6T59">
    <property type="method" value="EM"/>
    <property type="resolution" value="3.11 A"/>
    <property type="chains" value="t3=1-165"/>
</dbReference>
<dbReference type="PDB" id="6ZVK">
    <property type="method" value="EM"/>
    <property type="resolution" value="3.49 A"/>
    <property type="chains" value="M2=1-163"/>
</dbReference>
<dbReference type="PDB" id="7A01">
    <property type="method" value="EM"/>
    <property type="resolution" value="3.60 A"/>
    <property type="chains" value="M2=1-163"/>
</dbReference>
<dbReference type="PDB" id="7NWI">
    <property type="method" value="EM"/>
    <property type="resolution" value="3.13 A"/>
    <property type="chains" value="t=1-163"/>
</dbReference>
<dbReference type="PDB" id="7O7Y">
    <property type="method" value="EM"/>
    <property type="resolution" value="2.20 A"/>
    <property type="chains" value="Bt=1-165"/>
</dbReference>
<dbReference type="PDB" id="7O7Z">
    <property type="method" value="EM"/>
    <property type="resolution" value="2.40 A"/>
    <property type="chains" value="Bt=1-165"/>
</dbReference>
<dbReference type="PDB" id="7O80">
    <property type="method" value="EM"/>
    <property type="resolution" value="2.90 A"/>
    <property type="chains" value="Bt=1-165"/>
</dbReference>
<dbReference type="PDB" id="7O81">
    <property type="method" value="EM"/>
    <property type="resolution" value="3.10 A"/>
    <property type="chains" value="Bt=1-165"/>
</dbReference>
<dbReference type="PDB" id="7TOQ">
    <property type="method" value="EM"/>
    <property type="resolution" value="3.10 A"/>
    <property type="chains" value="AL12=1-163"/>
</dbReference>
<dbReference type="PDB" id="7TOR">
    <property type="method" value="EM"/>
    <property type="resolution" value="2.90 A"/>
    <property type="chains" value="AL12=9-161"/>
</dbReference>
<dbReference type="PDB" id="8BHF">
    <property type="method" value="EM"/>
    <property type="resolution" value="3.10 A"/>
    <property type="chains" value="f1=9-161"/>
</dbReference>
<dbReference type="PDB" id="8BPO">
    <property type="method" value="EM"/>
    <property type="resolution" value="2.80 A"/>
    <property type="chains" value="r2=1-165"/>
</dbReference>
<dbReference type="PDB" id="8BTK">
    <property type="method" value="EM"/>
    <property type="resolution" value="3.50 A"/>
    <property type="chains" value="Bt=1-165"/>
</dbReference>
<dbReference type="PDB" id="8P2K">
    <property type="method" value="EM"/>
    <property type="resolution" value="2.90 A"/>
    <property type="chains" value="Bt=1-165"/>
</dbReference>
<dbReference type="PDB" id="8SCB">
    <property type="method" value="EM"/>
    <property type="resolution" value="2.50 A"/>
    <property type="chains" value="t=1-165"/>
</dbReference>
<dbReference type="PDB" id="8VFT">
    <property type="method" value="EM"/>
    <property type="resolution" value="3.30 A"/>
    <property type="chains" value="t=1-165"/>
</dbReference>
<dbReference type="PDB" id="9BDN">
    <property type="method" value="EM"/>
    <property type="resolution" value="3.10 A"/>
    <property type="chains" value="AL12=9-161"/>
</dbReference>
<dbReference type="PDB" id="9BDP">
    <property type="method" value="EM"/>
    <property type="resolution" value="3.70 A"/>
    <property type="chains" value="AL12=9-161"/>
</dbReference>
<dbReference type="PDB" id="9F1B">
    <property type="method" value="EM"/>
    <property type="resolution" value="3.01 A"/>
    <property type="chains" value="Bt=1-165"/>
</dbReference>
<dbReference type="PDB" id="9F1C">
    <property type="method" value="EM"/>
    <property type="resolution" value="3.78 A"/>
    <property type="chains" value="Bt=1-165"/>
</dbReference>
<dbReference type="PDB" id="9F1D">
    <property type="method" value="EM"/>
    <property type="resolution" value="3.26 A"/>
    <property type="chains" value="Bt=1-165"/>
</dbReference>
<dbReference type="PDBsum" id="3JAG"/>
<dbReference type="PDBsum" id="3JAH"/>
<dbReference type="PDBsum" id="3JAI"/>
<dbReference type="PDBsum" id="5LZS"/>
<dbReference type="PDBsum" id="5LZT"/>
<dbReference type="PDBsum" id="5LZU"/>
<dbReference type="PDBsum" id="5LZV"/>
<dbReference type="PDBsum" id="5LZW"/>
<dbReference type="PDBsum" id="5LZX"/>
<dbReference type="PDBsum" id="5LZY"/>
<dbReference type="PDBsum" id="5LZZ"/>
<dbReference type="PDBsum" id="6D90"/>
<dbReference type="PDBsum" id="6D9J"/>
<dbReference type="PDBsum" id="6FTG"/>
<dbReference type="PDBsum" id="6FTI"/>
<dbReference type="PDBsum" id="6FTJ"/>
<dbReference type="PDBsum" id="6GZ3"/>
<dbReference type="PDBsum" id="6HCF"/>
<dbReference type="PDBsum" id="6HCJ"/>
<dbReference type="PDBsum" id="6HCM"/>
<dbReference type="PDBsum" id="6HCQ"/>
<dbReference type="PDBsum" id="6MTD"/>
<dbReference type="PDBsum" id="6MTE"/>
<dbReference type="PDBsum" id="6R5Q"/>
<dbReference type="PDBsum" id="6R6G"/>
<dbReference type="PDBsum" id="6R6P"/>
<dbReference type="PDBsum" id="6R7Q"/>
<dbReference type="PDBsum" id="6SGC"/>
<dbReference type="PDBsum" id="6T59"/>
<dbReference type="PDBsum" id="6ZVK"/>
<dbReference type="PDBsum" id="7A01"/>
<dbReference type="PDBsum" id="7NWI"/>
<dbReference type="PDBsum" id="7O7Y"/>
<dbReference type="PDBsum" id="7O7Z"/>
<dbReference type="PDBsum" id="7O80"/>
<dbReference type="PDBsum" id="7O81"/>
<dbReference type="PDBsum" id="7TOQ"/>
<dbReference type="PDBsum" id="7TOR"/>
<dbReference type="PDBsum" id="8BHF"/>
<dbReference type="PDBsum" id="8BPO"/>
<dbReference type="PDBsum" id="8BTK"/>
<dbReference type="PDBsum" id="8P2K"/>
<dbReference type="PDBsum" id="8SCB"/>
<dbReference type="PDBsum" id="8VFT"/>
<dbReference type="PDBsum" id="9BDN"/>
<dbReference type="PDBsum" id="9BDP"/>
<dbReference type="PDBsum" id="9F1B"/>
<dbReference type="PDBsum" id="9F1C"/>
<dbReference type="PDBsum" id="9F1D"/>
<dbReference type="EMDB" id="EMD-0098"/>
<dbReference type="EMDB" id="EMD-0099"/>
<dbReference type="EMDB" id="EMD-0100"/>
<dbReference type="EMDB" id="EMD-0192"/>
<dbReference type="EMDB" id="EMD-0194"/>
<dbReference type="EMDB" id="EMD-0195"/>
<dbReference type="EMDB" id="EMD-0197"/>
<dbReference type="EMDB" id="EMD-10181"/>
<dbReference type="EMDB" id="EMD-10380"/>
<dbReference type="EMDB" id="EMD-11459"/>
<dbReference type="EMDB" id="EMD-11590"/>
<dbReference type="EMDB" id="EMD-12633"/>
<dbReference type="EMDB" id="EMD-12756"/>
<dbReference type="EMDB" id="EMD-12757"/>
<dbReference type="EMDB" id="EMD-12758"/>
<dbReference type="EMDB" id="EMD-12759"/>
<dbReference type="EMDB" id="EMD-16052"/>
<dbReference type="EMDB" id="EMD-16155"/>
<dbReference type="EMDB" id="EMD-16232"/>
<dbReference type="EMDB" id="EMD-17367"/>
<dbReference type="EMDB" id="EMD-26035"/>
<dbReference type="EMDB" id="EMD-26036"/>
<dbReference type="EMDB" id="EMD-40344"/>
<dbReference type="EMDB" id="EMD-4130"/>
<dbReference type="EMDB" id="EMD-4131"/>
<dbReference type="EMDB" id="EMD-4132"/>
<dbReference type="EMDB" id="EMD-4133"/>
<dbReference type="EMDB" id="EMD-4134"/>
<dbReference type="EMDB" id="EMD-4135"/>
<dbReference type="EMDB" id="EMD-4136"/>
<dbReference type="EMDB" id="EMD-4137"/>
<dbReference type="EMDB" id="EMD-4300"/>
<dbReference type="EMDB" id="EMD-4315"/>
<dbReference type="EMDB" id="EMD-4316"/>
<dbReference type="EMDB" id="EMD-4317"/>
<dbReference type="EMDB" id="EMD-43189"/>
<dbReference type="EMDB" id="EMD-44463"/>
<dbReference type="EMDB" id="EMD-44464"/>
<dbReference type="EMDB" id="EMD-4729"/>
<dbReference type="EMDB" id="EMD-4735"/>
<dbReference type="EMDB" id="EMD-4737"/>
<dbReference type="EMDB" id="EMD-4745"/>
<dbReference type="EMDB" id="EMD-50124"/>
<dbReference type="EMDB" id="EMD-50125"/>
<dbReference type="EMDB" id="EMD-50126"/>
<dbReference type="EMDB" id="EMD-7834"/>
<dbReference type="EMDB" id="EMD-7836"/>
<dbReference type="EMDB" id="EMD-9240"/>
<dbReference type="EMDB" id="EMD-9242"/>
<dbReference type="SMR" id="G1SMR7"/>
<dbReference type="IntAct" id="G1SMR7">
    <property type="interactions" value="1"/>
</dbReference>
<dbReference type="PaxDb" id="9986-ENSOCUP00000004239"/>
<dbReference type="Ensembl" id="ENSOCUT00000004899.3">
    <property type="protein sequence ID" value="ENSOCUP00000004239.3"/>
    <property type="gene ID" value="ENSOCUG00000004902.3"/>
</dbReference>
<dbReference type="GeneID" id="100353722"/>
<dbReference type="KEGG" id="ocu:100353722"/>
<dbReference type="CTD" id="6136"/>
<dbReference type="eggNOG" id="KOG0886">
    <property type="taxonomic scope" value="Eukaryota"/>
</dbReference>
<dbReference type="GeneTree" id="ENSGT00390000006922"/>
<dbReference type="HOGENOM" id="CLU_074237_5_0_1"/>
<dbReference type="OrthoDB" id="9550325at2759"/>
<dbReference type="TreeFam" id="TF300123"/>
<dbReference type="Proteomes" id="UP000001811">
    <property type="component" value="Unplaced"/>
</dbReference>
<dbReference type="Bgee" id="ENSOCUG00000004902">
    <property type="expression patterns" value="Expressed in uterus and 15 other cell types or tissues"/>
</dbReference>
<dbReference type="GO" id="GO:0022625">
    <property type="term" value="C:cytosolic large ribosomal subunit"/>
    <property type="evidence" value="ECO:0007669"/>
    <property type="project" value="TreeGrafter"/>
</dbReference>
<dbReference type="GO" id="GO:0070180">
    <property type="term" value="F:large ribosomal subunit rRNA binding"/>
    <property type="evidence" value="ECO:0007669"/>
    <property type="project" value="TreeGrafter"/>
</dbReference>
<dbReference type="GO" id="GO:0003735">
    <property type="term" value="F:structural constituent of ribosome"/>
    <property type="evidence" value="ECO:0007669"/>
    <property type="project" value="InterPro"/>
</dbReference>
<dbReference type="GO" id="GO:0006412">
    <property type="term" value="P:translation"/>
    <property type="evidence" value="ECO:0007669"/>
    <property type="project" value="InterPro"/>
</dbReference>
<dbReference type="CDD" id="cd00349">
    <property type="entry name" value="Ribosomal_L11"/>
    <property type="match status" value="1"/>
</dbReference>
<dbReference type="FunFam" id="1.10.10.250:FF:000002">
    <property type="entry name" value="60S ribosomal protein L12"/>
    <property type="match status" value="1"/>
</dbReference>
<dbReference type="FunFam" id="3.30.1550.10:FF:000002">
    <property type="entry name" value="60S ribosomal protein L12"/>
    <property type="match status" value="1"/>
</dbReference>
<dbReference type="Gene3D" id="1.10.10.250">
    <property type="entry name" value="Ribosomal protein L11, C-terminal domain"/>
    <property type="match status" value="1"/>
</dbReference>
<dbReference type="Gene3D" id="3.30.1550.10">
    <property type="entry name" value="Ribosomal protein L11/L12, N-terminal domain"/>
    <property type="match status" value="1"/>
</dbReference>
<dbReference type="HAMAP" id="MF_00736">
    <property type="entry name" value="Ribosomal_uL11"/>
    <property type="match status" value="1"/>
</dbReference>
<dbReference type="InterPro" id="IPR000911">
    <property type="entry name" value="Ribosomal_uL11"/>
</dbReference>
<dbReference type="InterPro" id="IPR020783">
    <property type="entry name" value="Ribosomal_uL11_C"/>
</dbReference>
<dbReference type="InterPro" id="IPR036769">
    <property type="entry name" value="Ribosomal_uL11_C_sf"/>
</dbReference>
<dbReference type="InterPro" id="IPR020785">
    <property type="entry name" value="Ribosomal_uL11_CS"/>
</dbReference>
<dbReference type="InterPro" id="IPR020784">
    <property type="entry name" value="Ribosomal_uL11_N"/>
</dbReference>
<dbReference type="InterPro" id="IPR036796">
    <property type="entry name" value="Ribosomal_uL11_N_sf"/>
</dbReference>
<dbReference type="PANTHER" id="PTHR11661">
    <property type="entry name" value="60S RIBOSOMAL PROTEIN L12"/>
    <property type="match status" value="1"/>
</dbReference>
<dbReference type="PANTHER" id="PTHR11661:SF2">
    <property type="entry name" value="LARGE RIBOSOMAL SUBUNIT PROTEIN UL11"/>
    <property type="match status" value="1"/>
</dbReference>
<dbReference type="Pfam" id="PF00298">
    <property type="entry name" value="Ribosomal_L11"/>
    <property type="match status" value="1"/>
</dbReference>
<dbReference type="Pfam" id="PF03946">
    <property type="entry name" value="Ribosomal_L11_N"/>
    <property type="match status" value="1"/>
</dbReference>
<dbReference type="SMART" id="SM00649">
    <property type="entry name" value="RL11"/>
    <property type="match status" value="1"/>
</dbReference>
<dbReference type="SUPFAM" id="SSF54747">
    <property type="entry name" value="Ribosomal L11/L12e N-terminal domain"/>
    <property type="match status" value="1"/>
</dbReference>
<dbReference type="SUPFAM" id="SSF46906">
    <property type="entry name" value="Ribosomal protein L11, C-terminal domain"/>
    <property type="match status" value="1"/>
</dbReference>
<dbReference type="PROSITE" id="PS00359">
    <property type="entry name" value="RIBOSOMAL_L11"/>
    <property type="match status" value="1"/>
</dbReference>
<proteinExistence type="evidence at protein level"/>
<comment type="function">
    <text evidence="1 2 3 7">Component of the large ribosomal subunit (PubMed:26245381, PubMed:27863242, PubMed:30517857). The ribosome is a large ribonucleoprotein complex responsible for the synthesis of proteins in the cell (PubMed:26245381, PubMed:27863242, PubMed:30517857). Binds directly to 26S ribosomal RNA (By similarity).</text>
</comment>
<comment type="subunit">
    <text evidence="2 3 4 5 6 7 8 9 10">Component of the large ribosomal subunit. Mature ribosomes consist of a small (40S) and a large (60S) subunit (PubMed:26245381, PubMed:27863242, PubMed:29856316, PubMed:30293783, PubMed:30355441, PubMed:30517857, PubMed:31246176, PubMed:31768042, PubMed:33296660). The 40S subunit contains about 33 different proteins and 1 molecule of RNA (18S) (PubMed:26245381, PubMed:27863242, PubMed:29856316, PubMed:30293783, PubMed:30355441, PubMed:30517857, PubMed:31246176, PubMed:31768042, PubMed:33296660). The 60S subunit contains about 49 different proteins and 3 molecules of RNA (28S, 5.8S and 5S) (PubMed:26245381, PubMed:27863242, PubMed:29856316, PubMed:30293783, PubMed:30355441, PubMed:30517857, PubMed:31246176, PubMed:31768042, PubMed:33296660).</text>
</comment>
<comment type="subcellular location">
    <subcellularLocation>
        <location evidence="2 3 4 5 6 7 8 9 10">Cytoplasm</location>
    </subcellularLocation>
</comment>
<comment type="PTM">
    <text evidence="1">Ubiquitinated at Lys-48 and Lys-83 by RNF14 and RNF25 in response to ribosome collisions (ribosome stalling).</text>
</comment>
<comment type="similarity">
    <text evidence="11">Belongs to the universal ribosomal protein uL11 family.</text>
</comment>
<organism>
    <name type="scientific">Oryctolagus cuniculus</name>
    <name type="common">Rabbit</name>
    <dbReference type="NCBI Taxonomy" id="9986"/>
    <lineage>
        <taxon>Eukaryota</taxon>
        <taxon>Metazoa</taxon>
        <taxon>Chordata</taxon>
        <taxon>Craniata</taxon>
        <taxon>Vertebrata</taxon>
        <taxon>Euteleostomi</taxon>
        <taxon>Mammalia</taxon>
        <taxon>Eutheria</taxon>
        <taxon>Euarchontoglires</taxon>
        <taxon>Glires</taxon>
        <taxon>Lagomorpha</taxon>
        <taxon>Leporidae</taxon>
        <taxon>Oryctolagus</taxon>
    </lineage>
</organism>
<reference key="1">
    <citation type="journal article" date="2011" name="Nature">
        <title>A high-resolution map of human evolutionary constraint using 29 mammals.</title>
        <authorList>
            <person name="Lindblad-Toh K."/>
            <person name="Garber M."/>
            <person name="Zuk O."/>
            <person name="Lin M.F."/>
            <person name="Parker B.J."/>
            <person name="Washietl S."/>
            <person name="Kheradpour P."/>
            <person name="Ernst J."/>
            <person name="Jordan G."/>
            <person name="Mauceli E."/>
            <person name="Ward L.D."/>
            <person name="Lowe C.B."/>
            <person name="Holloway A.K."/>
            <person name="Clamp M."/>
            <person name="Gnerre S."/>
            <person name="Alfoldi J."/>
            <person name="Beal K."/>
            <person name="Chang J."/>
            <person name="Clawson H."/>
            <person name="Cuff J."/>
            <person name="Di Palma F."/>
            <person name="Fitzgerald S."/>
            <person name="Flicek P."/>
            <person name="Guttman M."/>
            <person name="Hubisz M.J."/>
            <person name="Jaffe D.B."/>
            <person name="Jungreis I."/>
            <person name="Kent W.J."/>
            <person name="Kostka D."/>
            <person name="Lara M."/>
            <person name="Martins A.L."/>
            <person name="Massingham T."/>
            <person name="Moltke I."/>
            <person name="Raney B.J."/>
            <person name="Rasmussen M.D."/>
            <person name="Robinson J."/>
            <person name="Stark A."/>
            <person name="Vilella A.J."/>
            <person name="Wen J."/>
            <person name="Xie X."/>
            <person name="Zody M.C."/>
            <person name="Baldwin J."/>
            <person name="Bloom T."/>
            <person name="Chin C.W."/>
            <person name="Heiman D."/>
            <person name="Nicol R."/>
            <person name="Nusbaum C."/>
            <person name="Young S."/>
            <person name="Wilkinson J."/>
            <person name="Worley K.C."/>
            <person name="Kovar C.L."/>
            <person name="Muzny D.M."/>
            <person name="Gibbs R.A."/>
            <person name="Cree A."/>
            <person name="Dihn H.H."/>
            <person name="Fowler G."/>
            <person name="Jhangiani S."/>
            <person name="Joshi V."/>
            <person name="Lee S."/>
            <person name="Lewis L.R."/>
            <person name="Nazareth L.V."/>
            <person name="Okwuonu G."/>
            <person name="Santibanez J."/>
            <person name="Warren W.C."/>
            <person name="Mardis E.R."/>
            <person name="Weinstock G.M."/>
            <person name="Wilson R.K."/>
            <person name="Delehaunty K."/>
            <person name="Dooling D."/>
            <person name="Fronik C."/>
            <person name="Fulton L."/>
            <person name="Fulton B."/>
            <person name="Graves T."/>
            <person name="Minx P."/>
            <person name="Sodergren E."/>
            <person name="Birney E."/>
            <person name="Margulies E.H."/>
            <person name="Herrero J."/>
            <person name="Green E.D."/>
            <person name="Haussler D."/>
            <person name="Siepel A."/>
            <person name="Goldman N."/>
            <person name="Pollard K.S."/>
            <person name="Pedersen J.S."/>
            <person name="Lander E.S."/>
            <person name="Kellis M."/>
        </authorList>
    </citation>
    <scope>NUCLEOTIDE SEQUENCE [LARGE SCALE GENOMIC DNA]</scope>
    <source>
        <strain>Thorbecke</strain>
    </source>
</reference>
<reference evidence="12 13" key="2">
    <citation type="journal article" date="2015" name="Nature">
        <title>Structural basis for stop codon recognition in eukaryotes.</title>
        <authorList>
            <person name="Brown A."/>
            <person name="Shao S."/>
            <person name="Murray J."/>
            <person name="Hegde R.S."/>
            <person name="Ramakrishnan V."/>
        </authorList>
    </citation>
    <scope>STRUCTURE BY ELECTRON MICROSCOPY (3.45 ANGSTROMS) OF 31-193 OF RIBOSOME</scope>
    <scope>FUNCTION</scope>
    <scope>SUBCELLULAR LOCATION</scope>
    <scope>SUBUNIT</scope>
</reference>
<reference evidence="14 15" key="3">
    <citation type="journal article" date="2016" name="Cell">
        <title>Decoding mammalian ribosome-mRNA states by translational GTPase complexes.</title>
        <authorList>
            <person name="Shao S."/>
            <person name="Murray J."/>
            <person name="Brown A."/>
            <person name="Taunton J."/>
            <person name="Ramakrishnan V."/>
            <person name="Hegde R.S."/>
        </authorList>
    </citation>
    <scope>STRUCTURE BY ELECTRON MICROSCOPY (3.31 ANGSTROMS) OF 1-226 OF RIBOSOME</scope>
    <scope>FUNCTION</scope>
    <scope>SUBCELLULAR LOCATION</scope>
    <scope>SUBUNIT</scope>
</reference>
<reference evidence="18" key="4">
    <citation type="journal article" date="2018" name="Cell Rep.">
        <title>tRNA translocation by the eukaryotic 80S ribosome and the impact of GTP hydrolysis.</title>
        <authorList>
            <person name="Flis J."/>
            <person name="Holm M."/>
            <person name="Rundlet E.J."/>
            <person name="Loerke J."/>
            <person name="Hilal T."/>
            <person name="Dabrowski M."/>
            <person name="Burger J."/>
            <person name="Mielke T."/>
            <person name="Blanchard S.C."/>
            <person name="Spahn C.M.T."/>
            <person name="Budkevich T.V."/>
        </authorList>
    </citation>
    <scope>STRUCTURE BY ELECTRON MICROSCOPY (3.60 ANGSTROMS) OF 43-193 OF RIBOSOME</scope>
    <scope>FUNCTION</scope>
    <scope>SUBCELLULAR LOCATION</scope>
    <scope>SUBUNIT</scope>
</reference>
<reference evidence="16 17" key="5">
    <citation type="journal article" date="2018" name="Elife">
        <title>Dual tRNA mimicry in the Cricket paralysis virus IRES uncovers an unexpected similarity with the Hepatitis C Virus IRES.</title>
        <authorList>
            <person name="Pisareva V.P."/>
            <person name="Pisarev A.V."/>
            <person name="Fernandez I.S."/>
        </authorList>
    </citation>
    <scope>STRUCTURE BY ELECTRON MICROSCOPY (3.20 ANGSTROMS) OF RIBOSOME</scope>
    <scope>SUBCELLULAR LOCATION</scope>
    <scope>SUBUNIT</scope>
</reference>
<reference evidence="21 22" key="6">
    <citation type="journal article" date="2018" name="Elife">
        <title>Structures of translationally inactive mammalian ribosomes.</title>
        <authorList>
            <person name="Brown A."/>
            <person name="Baird M.R."/>
            <person name="Yip M.C."/>
            <person name="Murray J."/>
            <person name="Shao S."/>
        </authorList>
    </citation>
    <scope>STRUCTURE BY ELECTRON MICROSCOPY (3.30 ANGSTROMS) OF 39-191 OF RIBOSOME</scope>
    <scope>SUBCELLULAR LOCATION</scope>
    <scope>SUBUNIT</scope>
</reference>
<reference evidence="19 20" key="7">
    <citation type="journal article" date="2018" name="Mol. Cell">
        <title>ZNF598 is a quality control sensor of collided ribosomes.</title>
        <authorList>
            <person name="Juszkiewicz S."/>
            <person name="Chandrasekaran V."/>
            <person name="Lin Z."/>
            <person name="Kraatz S."/>
            <person name="Ramakrishnan V."/>
            <person name="Hegde R.S."/>
        </authorList>
    </citation>
    <scope>STRUCTURE BY ELECTRON MICROSCOPY (3.80 ANGSTROMS) OF RIBOSOME</scope>
    <scope>SUBCELLULAR LOCATION</scope>
    <scope>SUBUNIT</scope>
</reference>
<reference evidence="23 24" key="8">
    <citation type="journal article" date="2019" name="Elife">
        <title>Structural and mutational analysis of the ribosome-arresting human XBP1u.</title>
        <authorList>
            <person name="Shanmuganathan V."/>
            <person name="Schiller N."/>
            <person name="Magoulopoulou A."/>
            <person name="Cheng J."/>
            <person name="Braunger K."/>
            <person name="Cymer F."/>
            <person name="Berninghausen O."/>
            <person name="Beatrix B."/>
            <person name="Kohno K."/>
            <person name="von Heijne G."/>
            <person name="Beckmann R."/>
        </authorList>
    </citation>
    <scope>STRUCTURE BY ELECTRON MICROSCOPY (3.00 ANGSTROMS) OF 39-191 OF RIBOSOME</scope>
    <scope>SUBCELLULAR LOCATION</scope>
    <scope>SUBUNIT</scope>
</reference>
<reference evidence="25" key="9">
    <citation type="journal article" date="2019" name="Nat. Struct. Mol. Biol.">
        <title>Mechanism of ribosome stalling during translation of a poly(A) tail.</title>
        <authorList>
            <person name="Chandrasekaran V."/>
            <person name="Juszkiewicz S."/>
            <person name="Choi J."/>
            <person name="Puglisi J.D."/>
            <person name="Brown A."/>
            <person name="Shao S."/>
            <person name="Ramakrishnan V."/>
            <person name="Hegde R.S."/>
        </authorList>
    </citation>
    <scope>STRUCTURE BY ELECTRON MICROSCOPY (2.80 ANGSTROMS) OF RIBOSOME</scope>
    <scope>SUBCELLULAR LOCATION</scope>
    <scope>SUBUNIT</scope>
</reference>
<reference evidence="26 27" key="10">
    <citation type="journal article" date="2020" name="Cell Rep.">
        <title>The Halastavi arva virus intergenic region IRES promotes translation by the simplest possible initiation mechanism.</title>
        <authorList>
            <person name="Abaeva I.S."/>
            <person name="Vicens Q."/>
            <person name="Bochler A."/>
            <person name="Soufari H."/>
            <person name="Simonetti A."/>
            <person name="Pestova T.V."/>
            <person name="Hashem Y."/>
            <person name="Hellen C.U.T."/>
        </authorList>
    </citation>
    <scope>STRUCTURE BY ELECTRON MICROSCOPY (3.49 ANGSTROMS) OF 1-163 OF RIBOSOME</scope>
    <scope>SUBCELLULAR LOCATION</scope>
    <scope>SUBUNIT</scope>
</reference>
<feature type="chain" id="PRO_0000460100" description="Large ribosomal subunit protein uL11">
    <location>
        <begin position="1"/>
        <end position="165"/>
    </location>
</feature>
<feature type="modified residue" description="Phosphoserine" evidence="1">
    <location>
        <position position="38"/>
    </location>
</feature>
<feature type="modified residue" description="N6-acetyllysine" evidence="1">
    <location>
        <position position="54"/>
    </location>
</feature>
<feature type="modified residue" description="Phosphoserine" evidence="1">
    <location>
        <position position="165"/>
    </location>
</feature>
<feature type="cross-link" description="Glycyl lysine isopeptide (Lys-Gly) (interchain with G-Cter in SUMO2)" evidence="1">
    <location>
        <position position="40"/>
    </location>
</feature>
<feature type="cross-link" description="Glycyl lysine isopeptide (Lys-Gly) (interchain with G-Cter in ubiquitin)" evidence="1">
    <location>
        <position position="48"/>
    </location>
</feature>
<feature type="cross-link" description="Glycyl lysine isopeptide (Lys-Gly) (interchain with G-Cter in ubiquitin)" evidence="1">
    <location>
        <position position="83"/>
    </location>
</feature>